<accession>B1XV66</accession>
<sequence>MLIVLSPAKSLDYKTPFKVKAPTLPEFVSESAKLITDLKKLAPQDVAKLMGLSDQLAALNVGRYRDWSKKFTEENSKPAIYAFDGDVYDGFDVKTLKPKAVEFAQDHIRILSGLYGVLKPLDLMQPYRLEMGTSFKNARGKDLYAFWGNRVTDSLKKALDKQKNPVLLNLASEEYFKVLQPKELDCPVISPVFQDAKDGKYKIISFYAKRARGLMARYVVENRITDPVDLKGFSLDDYKYYAAESKIDKPVFRRVERK</sequence>
<gene>
    <name type="ordered locus">Pnec_1068</name>
</gene>
<evidence type="ECO:0000255" key="1">
    <source>
        <dbReference type="HAMAP-Rule" id="MF_00652"/>
    </source>
</evidence>
<comment type="similarity">
    <text evidence="1">Belongs to the UPF0246 family.</text>
</comment>
<reference key="1">
    <citation type="journal article" date="2013" name="Proc. Natl. Acad. Sci. U.S.A.">
        <title>Polynucleobacter necessarius, a model for genome reduction in both free-living and symbiotic bacteria.</title>
        <authorList>
            <person name="Boscaro V."/>
            <person name="Felletti M."/>
            <person name="Vannini C."/>
            <person name="Ackerman M.S."/>
            <person name="Chain P.S."/>
            <person name="Malfatti S."/>
            <person name="Vergez L.M."/>
            <person name="Shin M."/>
            <person name="Doak T.G."/>
            <person name="Lynch M."/>
            <person name="Petroni G."/>
        </authorList>
    </citation>
    <scope>NUCLEOTIDE SEQUENCE [LARGE SCALE GENOMIC DNA]</scope>
    <source>
        <strain>STIR1</strain>
    </source>
</reference>
<dbReference type="EMBL" id="CP001010">
    <property type="protein sequence ID" value="ACB44243.1"/>
    <property type="molecule type" value="Genomic_DNA"/>
</dbReference>
<dbReference type="SMR" id="B1XV66"/>
<dbReference type="STRING" id="452638.Pnec_1068"/>
<dbReference type="KEGG" id="pne:Pnec_1068"/>
<dbReference type="eggNOG" id="COG3022">
    <property type="taxonomic scope" value="Bacteria"/>
</dbReference>
<dbReference type="HOGENOM" id="CLU_061989_0_0_4"/>
<dbReference type="OrthoDB" id="9777133at2"/>
<dbReference type="GO" id="GO:0005829">
    <property type="term" value="C:cytosol"/>
    <property type="evidence" value="ECO:0007669"/>
    <property type="project" value="TreeGrafter"/>
</dbReference>
<dbReference type="GO" id="GO:0033194">
    <property type="term" value="P:response to hydroperoxide"/>
    <property type="evidence" value="ECO:0007669"/>
    <property type="project" value="TreeGrafter"/>
</dbReference>
<dbReference type="HAMAP" id="MF_00652">
    <property type="entry name" value="UPF0246"/>
    <property type="match status" value="1"/>
</dbReference>
<dbReference type="InterPro" id="IPR005583">
    <property type="entry name" value="YaaA"/>
</dbReference>
<dbReference type="NCBIfam" id="NF002541">
    <property type="entry name" value="PRK02101.1-1"/>
    <property type="match status" value="1"/>
</dbReference>
<dbReference type="NCBIfam" id="NF002542">
    <property type="entry name" value="PRK02101.1-3"/>
    <property type="match status" value="1"/>
</dbReference>
<dbReference type="PANTHER" id="PTHR30283:SF4">
    <property type="entry name" value="PEROXIDE STRESS RESISTANCE PROTEIN YAAA"/>
    <property type="match status" value="1"/>
</dbReference>
<dbReference type="PANTHER" id="PTHR30283">
    <property type="entry name" value="PEROXIDE STRESS RESPONSE PROTEIN YAAA"/>
    <property type="match status" value="1"/>
</dbReference>
<dbReference type="Pfam" id="PF03883">
    <property type="entry name" value="H2O2_YaaD"/>
    <property type="match status" value="1"/>
</dbReference>
<feature type="chain" id="PRO_1000131131" description="UPF0246 protein Pnec_1068">
    <location>
        <begin position="1"/>
        <end position="258"/>
    </location>
</feature>
<proteinExistence type="inferred from homology"/>
<organism>
    <name type="scientific">Polynucleobacter necessarius subsp. necessarius (strain STIR1)</name>
    <dbReference type="NCBI Taxonomy" id="452638"/>
    <lineage>
        <taxon>Bacteria</taxon>
        <taxon>Pseudomonadati</taxon>
        <taxon>Pseudomonadota</taxon>
        <taxon>Betaproteobacteria</taxon>
        <taxon>Burkholderiales</taxon>
        <taxon>Burkholderiaceae</taxon>
        <taxon>Polynucleobacter</taxon>
    </lineage>
</organism>
<name>Y1068_POLNS</name>
<protein>
    <recommendedName>
        <fullName evidence="1">UPF0246 protein Pnec_1068</fullName>
    </recommendedName>
</protein>